<keyword id="KW-0687">Ribonucleoprotein</keyword>
<keyword id="KW-0689">Ribosomal protein</keyword>
<comment type="similarity">
    <text evidence="1">Belongs to the bacterial ribosomal protein bL32 family.</text>
</comment>
<reference key="1">
    <citation type="journal article" date="2007" name="PLoS ONE">
        <title>Complete genomic characterization of a pathogenic A.II strain of Francisella tularensis subspecies tularensis.</title>
        <authorList>
            <person name="Beckstrom-Sternberg S.M."/>
            <person name="Auerbach R.K."/>
            <person name="Godbole S."/>
            <person name="Pearson J.V."/>
            <person name="Beckstrom-Sternberg J.S."/>
            <person name="Deng Z."/>
            <person name="Munk C."/>
            <person name="Kubota K."/>
            <person name="Zhou Y."/>
            <person name="Bruce D."/>
            <person name="Noronha J."/>
            <person name="Scheuermann R.H."/>
            <person name="Wang A."/>
            <person name="Wei X."/>
            <person name="Wang J."/>
            <person name="Hao J."/>
            <person name="Wagner D.M."/>
            <person name="Brettin T.S."/>
            <person name="Brown N."/>
            <person name="Gilna P."/>
            <person name="Keim P.S."/>
        </authorList>
    </citation>
    <scope>NUCLEOTIDE SEQUENCE [LARGE SCALE GENOMIC DNA]</scope>
    <source>
        <strain>WY96-3418</strain>
    </source>
</reference>
<dbReference type="EMBL" id="CP000608">
    <property type="protein sequence ID" value="ABO46435.1"/>
    <property type="molecule type" value="Genomic_DNA"/>
</dbReference>
<dbReference type="RefSeq" id="WP_003022175.1">
    <property type="nucleotide sequence ID" value="NC_009257.1"/>
</dbReference>
<dbReference type="SMR" id="A4IWY3"/>
<dbReference type="KEGG" id="ftw:FTW_0520"/>
<dbReference type="HOGENOM" id="CLU_129084_2_1_6"/>
<dbReference type="GO" id="GO:0015934">
    <property type="term" value="C:large ribosomal subunit"/>
    <property type="evidence" value="ECO:0007669"/>
    <property type="project" value="InterPro"/>
</dbReference>
<dbReference type="GO" id="GO:0003735">
    <property type="term" value="F:structural constituent of ribosome"/>
    <property type="evidence" value="ECO:0007669"/>
    <property type="project" value="InterPro"/>
</dbReference>
<dbReference type="GO" id="GO:0006412">
    <property type="term" value="P:translation"/>
    <property type="evidence" value="ECO:0007669"/>
    <property type="project" value="UniProtKB-UniRule"/>
</dbReference>
<dbReference type="HAMAP" id="MF_00340">
    <property type="entry name" value="Ribosomal_bL32"/>
    <property type="match status" value="1"/>
</dbReference>
<dbReference type="InterPro" id="IPR002677">
    <property type="entry name" value="Ribosomal_bL32"/>
</dbReference>
<dbReference type="InterPro" id="IPR044957">
    <property type="entry name" value="Ribosomal_bL32_bact"/>
</dbReference>
<dbReference type="InterPro" id="IPR011332">
    <property type="entry name" value="Ribosomal_zn-bd"/>
</dbReference>
<dbReference type="NCBIfam" id="TIGR01031">
    <property type="entry name" value="rpmF_bact"/>
    <property type="match status" value="1"/>
</dbReference>
<dbReference type="PANTHER" id="PTHR35534">
    <property type="entry name" value="50S RIBOSOMAL PROTEIN L32"/>
    <property type="match status" value="1"/>
</dbReference>
<dbReference type="PANTHER" id="PTHR35534:SF1">
    <property type="entry name" value="LARGE RIBOSOMAL SUBUNIT PROTEIN BL32"/>
    <property type="match status" value="1"/>
</dbReference>
<dbReference type="Pfam" id="PF01783">
    <property type="entry name" value="Ribosomal_L32p"/>
    <property type="match status" value="1"/>
</dbReference>
<dbReference type="SUPFAM" id="SSF57829">
    <property type="entry name" value="Zn-binding ribosomal proteins"/>
    <property type="match status" value="1"/>
</dbReference>
<sequence>MAVQQVKKSRSKRDIRRSHDSLTNPTLSTDKSTGELHLRHHVSPNGFYKGRKVVDTKSED</sequence>
<evidence type="ECO:0000255" key="1">
    <source>
        <dbReference type="HAMAP-Rule" id="MF_00340"/>
    </source>
</evidence>
<evidence type="ECO:0000256" key="2">
    <source>
        <dbReference type="SAM" id="MobiDB-lite"/>
    </source>
</evidence>
<evidence type="ECO:0000305" key="3"/>
<feature type="chain" id="PRO_0000296468" description="Large ribosomal subunit protein bL32">
    <location>
        <begin position="1"/>
        <end position="60"/>
    </location>
</feature>
<feature type="region of interest" description="Disordered" evidence="2">
    <location>
        <begin position="1"/>
        <end position="60"/>
    </location>
</feature>
<feature type="compositionally biased region" description="Basic residues" evidence="2">
    <location>
        <begin position="7"/>
        <end position="16"/>
    </location>
</feature>
<feature type="compositionally biased region" description="Polar residues" evidence="2">
    <location>
        <begin position="22"/>
        <end position="31"/>
    </location>
</feature>
<gene>
    <name evidence="1" type="primary">rpmF</name>
    <name type="ordered locus">FTW_0520</name>
</gene>
<organism>
    <name type="scientific">Francisella tularensis subsp. tularensis (strain WY96-3418)</name>
    <dbReference type="NCBI Taxonomy" id="418136"/>
    <lineage>
        <taxon>Bacteria</taxon>
        <taxon>Pseudomonadati</taxon>
        <taxon>Pseudomonadota</taxon>
        <taxon>Gammaproteobacteria</taxon>
        <taxon>Thiotrichales</taxon>
        <taxon>Francisellaceae</taxon>
        <taxon>Francisella</taxon>
    </lineage>
</organism>
<proteinExistence type="inferred from homology"/>
<protein>
    <recommendedName>
        <fullName evidence="1">Large ribosomal subunit protein bL32</fullName>
    </recommendedName>
    <alternativeName>
        <fullName evidence="3">50S ribosomal protein L32</fullName>
    </alternativeName>
</protein>
<name>RL32_FRATW</name>
<accession>A4IWY3</accession>